<dbReference type="EC" id="5.4.3.8" evidence="1"/>
<dbReference type="EMBL" id="BX571965">
    <property type="protein sequence ID" value="CAH36631.1"/>
    <property type="molecule type" value="Genomic_DNA"/>
</dbReference>
<dbReference type="RefSeq" id="WP_004527562.1">
    <property type="nucleotide sequence ID" value="NZ_CP009538.1"/>
</dbReference>
<dbReference type="RefSeq" id="YP_109219.1">
    <property type="nucleotide sequence ID" value="NC_006350.1"/>
</dbReference>
<dbReference type="SMR" id="Q63RP8"/>
<dbReference type="STRING" id="272560.BPSL2623"/>
<dbReference type="KEGG" id="bps:BPSL2623"/>
<dbReference type="PATRIC" id="fig|272560.51.peg.2730"/>
<dbReference type="eggNOG" id="COG0001">
    <property type="taxonomic scope" value="Bacteria"/>
</dbReference>
<dbReference type="UniPathway" id="UPA00251">
    <property type="reaction ID" value="UER00317"/>
</dbReference>
<dbReference type="Proteomes" id="UP000000605">
    <property type="component" value="Chromosome 1"/>
</dbReference>
<dbReference type="GO" id="GO:0005737">
    <property type="term" value="C:cytoplasm"/>
    <property type="evidence" value="ECO:0007669"/>
    <property type="project" value="UniProtKB-SubCell"/>
</dbReference>
<dbReference type="GO" id="GO:0042286">
    <property type="term" value="F:glutamate-1-semialdehyde 2,1-aminomutase activity"/>
    <property type="evidence" value="ECO:0007669"/>
    <property type="project" value="UniProtKB-UniRule"/>
</dbReference>
<dbReference type="GO" id="GO:0030170">
    <property type="term" value="F:pyridoxal phosphate binding"/>
    <property type="evidence" value="ECO:0007669"/>
    <property type="project" value="InterPro"/>
</dbReference>
<dbReference type="GO" id="GO:0008483">
    <property type="term" value="F:transaminase activity"/>
    <property type="evidence" value="ECO:0007669"/>
    <property type="project" value="InterPro"/>
</dbReference>
<dbReference type="GO" id="GO:0006782">
    <property type="term" value="P:protoporphyrinogen IX biosynthetic process"/>
    <property type="evidence" value="ECO:0007669"/>
    <property type="project" value="UniProtKB-UniRule"/>
</dbReference>
<dbReference type="CDD" id="cd00610">
    <property type="entry name" value="OAT_like"/>
    <property type="match status" value="1"/>
</dbReference>
<dbReference type="FunFam" id="3.40.640.10:FF:000021">
    <property type="entry name" value="Glutamate-1-semialdehyde 2,1-aminomutase"/>
    <property type="match status" value="1"/>
</dbReference>
<dbReference type="Gene3D" id="3.90.1150.10">
    <property type="entry name" value="Aspartate Aminotransferase, domain 1"/>
    <property type="match status" value="1"/>
</dbReference>
<dbReference type="Gene3D" id="3.40.640.10">
    <property type="entry name" value="Type I PLP-dependent aspartate aminotransferase-like (Major domain)"/>
    <property type="match status" value="1"/>
</dbReference>
<dbReference type="HAMAP" id="MF_00375">
    <property type="entry name" value="HemL_aminotrans_3"/>
    <property type="match status" value="1"/>
</dbReference>
<dbReference type="InterPro" id="IPR004639">
    <property type="entry name" value="4pyrrol_synth_GluAld_NH2Trfase"/>
</dbReference>
<dbReference type="InterPro" id="IPR005814">
    <property type="entry name" value="Aminotrans_3"/>
</dbReference>
<dbReference type="InterPro" id="IPR049704">
    <property type="entry name" value="Aminotrans_3_PPA_site"/>
</dbReference>
<dbReference type="InterPro" id="IPR015424">
    <property type="entry name" value="PyrdxlP-dep_Trfase"/>
</dbReference>
<dbReference type="InterPro" id="IPR015421">
    <property type="entry name" value="PyrdxlP-dep_Trfase_major"/>
</dbReference>
<dbReference type="InterPro" id="IPR015422">
    <property type="entry name" value="PyrdxlP-dep_Trfase_small"/>
</dbReference>
<dbReference type="NCBIfam" id="TIGR00713">
    <property type="entry name" value="hemL"/>
    <property type="match status" value="1"/>
</dbReference>
<dbReference type="NCBIfam" id="NF000818">
    <property type="entry name" value="PRK00062.1"/>
    <property type="match status" value="1"/>
</dbReference>
<dbReference type="PANTHER" id="PTHR43713">
    <property type="entry name" value="GLUTAMATE-1-SEMIALDEHYDE 2,1-AMINOMUTASE"/>
    <property type="match status" value="1"/>
</dbReference>
<dbReference type="PANTHER" id="PTHR43713:SF3">
    <property type="entry name" value="GLUTAMATE-1-SEMIALDEHYDE 2,1-AMINOMUTASE 1, CHLOROPLASTIC-RELATED"/>
    <property type="match status" value="1"/>
</dbReference>
<dbReference type="Pfam" id="PF00202">
    <property type="entry name" value="Aminotran_3"/>
    <property type="match status" value="1"/>
</dbReference>
<dbReference type="SUPFAM" id="SSF53383">
    <property type="entry name" value="PLP-dependent transferases"/>
    <property type="match status" value="1"/>
</dbReference>
<dbReference type="PROSITE" id="PS00600">
    <property type="entry name" value="AA_TRANSFER_CLASS_3"/>
    <property type="match status" value="1"/>
</dbReference>
<reference key="1">
    <citation type="journal article" date="2004" name="Proc. Natl. Acad. Sci. U.S.A.">
        <title>Genomic plasticity of the causative agent of melioidosis, Burkholderia pseudomallei.</title>
        <authorList>
            <person name="Holden M.T.G."/>
            <person name="Titball R.W."/>
            <person name="Peacock S.J."/>
            <person name="Cerdeno-Tarraga A.-M."/>
            <person name="Atkins T."/>
            <person name="Crossman L.C."/>
            <person name="Pitt T."/>
            <person name="Churcher C."/>
            <person name="Mungall K.L."/>
            <person name="Bentley S.D."/>
            <person name="Sebaihia M."/>
            <person name="Thomson N.R."/>
            <person name="Bason N."/>
            <person name="Beacham I.R."/>
            <person name="Brooks K."/>
            <person name="Brown K.A."/>
            <person name="Brown N.F."/>
            <person name="Challis G.L."/>
            <person name="Cherevach I."/>
            <person name="Chillingworth T."/>
            <person name="Cronin A."/>
            <person name="Crossett B."/>
            <person name="Davis P."/>
            <person name="DeShazer D."/>
            <person name="Feltwell T."/>
            <person name="Fraser A."/>
            <person name="Hance Z."/>
            <person name="Hauser H."/>
            <person name="Holroyd S."/>
            <person name="Jagels K."/>
            <person name="Keith K.E."/>
            <person name="Maddison M."/>
            <person name="Moule S."/>
            <person name="Price C."/>
            <person name="Quail M.A."/>
            <person name="Rabbinowitsch E."/>
            <person name="Rutherford K."/>
            <person name="Sanders M."/>
            <person name="Simmonds M."/>
            <person name="Songsivilai S."/>
            <person name="Stevens K."/>
            <person name="Tumapa S."/>
            <person name="Vesaratchavest M."/>
            <person name="Whitehead S."/>
            <person name="Yeats C."/>
            <person name="Barrell B.G."/>
            <person name="Oyston P.C.F."/>
            <person name="Parkhill J."/>
        </authorList>
    </citation>
    <scope>NUCLEOTIDE SEQUENCE [LARGE SCALE GENOMIC DNA]</scope>
    <source>
        <strain>K96243</strain>
    </source>
</reference>
<keyword id="KW-0963">Cytoplasm</keyword>
<keyword id="KW-0413">Isomerase</keyword>
<keyword id="KW-0627">Porphyrin biosynthesis</keyword>
<keyword id="KW-0663">Pyridoxal phosphate</keyword>
<keyword id="KW-1185">Reference proteome</keyword>
<accession>Q63RP8</accession>
<gene>
    <name evidence="1" type="primary">hemL</name>
    <name type="ordered locus">BPSL2623</name>
</gene>
<name>GSA_BURPS</name>
<sequence>MSNNQTLFERAQRTIPGGVNSPVRAFRSVGGTPRFVARAQGAYFWDADGKRYIDYIGSWGPMIVGHVHPDVLAAVQRVLADGFSFGAPTEAEIEIAEEICKLVPSIEQVRMVSSGTEATMSALRLARGFTGRSRIVKFEGCYHGHADSLLVKAGSGLLTFGNPTSAGVPADVAKHTTVLEYNNVAALEEAFAAFGGEIAAVIVEPVAGNMNLVRGTPEFLNALRALTAKHGAVLIFDEVMCGFRVALGGAQQHYGITPDLTCLGKVIGGGMPAAAFGGRGDIMSHLAPLGGVYQAGTLSGNPVAVAAGLATLRLIQAPGFHDALADKTRRLADGLAAEARAAGVPFSADAIGGMFGLYFTEQVPASFADVTKSDIERFNRFFHLMLDAGVYFAPSAYEAGFVSSAHDDATLDATLDAARRAFAALRA</sequence>
<proteinExistence type="inferred from homology"/>
<feature type="chain" id="PRO_0000243555" description="Glutamate-1-semialdehyde 2,1-aminomutase">
    <location>
        <begin position="1"/>
        <end position="427"/>
    </location>
</feature>
<feature type="modified residue" description="N6-(pyridoxal phosphate)lysine" evidence="1">
    <location>
        <position position="265"/>
    </location>
</feature>
<organism>
    <name type="scientific">Burkholderia pseudomallei (strain K96243)</name>
    <dbReference type="NCBI Taxonomy" id="272560"/>
    <lineage>
        <taxon>Bacteria</taxon>
        <taxon>Pseudomonadati</taxon>
        <taxon>Pseudomonadota</taxon>
        <taxon>Betaproteobacteria</taxon>
        <taxon>Burkholderiales</taxon>
        <taxon>Burkholderiaceae</taxon>
        <taxon>Burkholderia</taxon>
        <taxon>pseudomallei group</taxon>
    </lineage>
</organism>
<protein>
    <recommendedName>
        <fullName evidence="1">Glutamate-1-semialdehyde 2,1-aminomutase</fullName>
        <shortName evidence="1">GSA</shortName>
        <ecNumber evidence="1">5.4.3.8</ecNumber>
    </recommendedName>
    <alternativeName>
        <fullName evidence="1">Glutamate-1-semialdehyde aminotransferase</fullName>
        <shortName evidence="1">GSA-AT</shortName>
    </alternativeName>
</protein>
<comment type="catalytic activity">
    <reaction evidence="1">
        <text>(S)-4-amino-5-oxopentanoate = 5-aminolevulinate</text>
        <dbReference type="Rhea" id="RHEA:14265"/>
        <dbReference type="ChEBI" id="CHEBI:57501"/>
        <dbReference type="ChEBI" id="CHEBI:356416"/>
        <dbReference type="EC" id="5.4.3.8"/>
    </reaction>
</comment>
<comment type="cofactor">
    <cofactor evidence="1">
        <name>pyridoxal 5'-phosphate</name>
        <dbReference type="ChEBI" id="CHEBI:597326"/>
    </cofactor>
</comment>
<comment type="pathway">
    <text evidence="1">Porphyrin-containing compound metabolism; protoporphyrin-IX biosynthesis; 5-aminolevulinate from L-glutamyl-tRNA(Glu): step 2/2.</text>
</comment>
<comment type="subunit">
    <text evidence="1">Homodimer.</text>
</comment>
<comment type="subcellular location">
    <subcellularLocation>
        <location evidence="1">Cytoplasm</location>
    </subcellularLocation>
</comment>
<comment type="similarity">
    <text evidence="1">Belongs to the class-III pyridoxal-phosphate-dependent aminotransferase family. HemL subfamily.</text>
</comment>
<evidence type="ECO:0000255" key="1">
    <source>
        <dbReference type="HAMAP-Rule" id="MF_00375"/>
    </source>
</evidence>